<dbReference type="EMBL" id="CP000606">
    <property type="protein sequence ID" value="ABO25159.1"/>
    <property type="molecule type" value="Genomic_DNA"/>
</dbReference>
<dbReference type="RefSeq" id="WP_011867089.1">
    <property type="nucleotide sequence ID" value="NC_009092.1"/>
</dbReference>
<dbReference type="SMR" id="A3QI61"/>
<dbReference type="STRING" id="323850.Shew_3293"/>
<dbReference type="KEGG" id="slo:Shew_3293"/>
<dbReference type="eggNOG" id="COG0103">
    <property type="taxonomic scope" value="Bacteria"/>
</dbReference>
<dbReference type="HOGENOM" id="CLU_046483_2_1_6"/>
<dbReference type="OrthoDB" id="9803965at2"/>
<dbReference type="Proteomes" id="UP000001558">
    <property type="component" value="Chromosome"/>
</dbReference>
<dbReference type="GO" id="GO:0022627">
    <property type="term" value="C:cytosolic small ribosomal subunit"/>
    <property type="evidence" value="ECO:0007669"/>
    <property type="project" value="TreeGrafter"/>
</dbReference>
<dbReference type="GO" id="GO:0003723">
    <property type="term" value="F:RNA binding"/>
    <property type="evidence" value="ECO:0007669"/>
    <property type="project" value="TreeGrafter"/>
</dbReference>
<dbReference type="GO" id="GO:0003735">
    <property type="term" value="F:structural constituent of ribosome"/>
    <property type="evidence" value="ECO:0007669"/>
    <property type="project" value="InterPro"/>
</dbReference>
<dbReference type="GO" id="GO:0006412">
    <property type="term" value="P:translation"/>
    <property type="evidence" value="ECO:0007669"/>
    <property type="project" value="UniProtKB-UniRule"/>
</dbReference>
<dbReference type="FunFam" id="3.30.230.10:FF:000001">
    <property type="entry name" value="30S ribosomal protein S9"/>
    <property type="match status" value="1"/>
</dbReference>
<dbReference type="Gene3D" id="3.30.230.10">
    <property type="match status" value="1"/>
</dbReference>
<dbReference type="HAMAP" id="MF_00532_B">
    <property type="entry name" value="Ribosomal_uS9_B"/>
    <property type="match status" value="1"/>
</dbReference>
<dbReference type="InterPro" id="IPR020568">
    <property type="entry name" value="Ribosomal_Su5_D2-typ_SF"/>
</dbReference>
<dbReference type="InterPro" id="IPR000754">
    <property type="entry name" value="Ribosomal_uS9"/>
</dbReference>
<dbReference type="InterPro" id="IPR023035">
    <property type="entry name" value="Ribosomal_uS9_bac/plastid"/>
</dbReference>
<dbReference type="InterPro" id="IPR020574">
    <property type="entry name" value="Ribosomal_uS9_CS"/>
</dbReference>
<dbReference type="InterPro" id="IPR014721">
    <property type="entry name" value="Ribsml_uS5_D2-typ_fold_subgr"/>
</dbReference>
<dbReference type="NCBIfam" id="NF001099">
    <property type="entry name" value="PRK00132.1"/>
    <property type="match status" value="1"/>
</dbReference>
<dbReference type="PANTHER" id="PTHR21569">
    <property type="entry name" value="RIBOSOMAL PROTEIN S9"/>
    <property type="match status" value="1"/>
</dbReference>
<dbReference type="PANTHER" id="PTHR21569:SF1">
    <property type="entry name" value="SMALL RIBOSOMAL SUBUNIT PROTEIN US9M"/>
    <property type="match status" value="1"/>
</dbReference>
<dbReference type="Pfam" id="PF00380">
    <property type="entry name" value="Ribosomal_S9"/>
    <property type="match status" value="1"/>
</dbReference>
<dbReference type="SUPFAM" id="SSF54211">
    <property type="entry name" value="Ribosomal protein S5 domain 2-like"/>
    <property type="match status" value="1"/>
</dbReference>
<dbReference type="PROSITE" id="PS00360">
    <property type="entry name" value="RIBOSOMAL_S9"/>
    <property type="match status" value="1"/>
</dbReference>
<protein>
    <recommendedName>
        <fullName evidence="1">Small ribosomal subunit protein uS9</fullName>
    </recommendedName>
    <alternativeName>
        <fullName evidence="2">30S ribosomal protein S9</fullName>
    </alternativeName>
</protein>
<reference key="1">
    <citation type="submission" date="2007-03" db="EMBL/GenBank/DDBJ databases">
        <title>Complete sequence of Shewanella loihica PV-4.</title>
        <authorList>
            <consortium name="US DOE Joint Genome Institute"/>
            <person name="Copeland A."/>
            <person name="Lucas S."/>
            <person name="Lapidus A."/>
            <person name="Barry K."/>
            <person name="Detter J.C."/>
            <person name="Glavina del Rio T."/>
            <person name="Hammon N."/>
            <person name="Israni S."/>
            <person name="Dalin E."/>
            <person name="Tice H."/>
            <person name="Pitluck S."/>
            <person name="Chain P."/>
            <person name="Malfatti S."/>
            <person name="Shin M."/>
            <person name="Vergez L."/>
            <person name="Schmutz J."/>
            <person name="Larimer F."/>
            <person name="Land M."/>
            <person name="Hauser L."/>
            <person name="Kyrpides N."/>
            <person name="Mikhailova N."/>
            <person name="Romine M.F."/>
            <person name="Serres G."/>
            <person name="Fredrickson J."/>
            <person name="Tiedje J."/>
            <person name="Richardson P."/>
        </authorList>
    </citation>
    <scope>NUCLEOTIDE SEQUENCE [LARGE SCALE GENOMIC DNA]</scope>
    <source>
        <strain>ATCC BAA-1088 / PV-4</strain>
    </source>
</reference>
<accession>A3QI61</accession>
<keyword id="KW-1185">Reference proteome</keyword>
<keyword id="KW-0687">Ribonucleoprotein</keyword>
<keyword id="KW-0689">Ribosomal protein</keyword>
<sequence length="130" mass="14580">MSATQYYGTGRRKTSTARVFAKVGSGNIVVNQRPLDEYFGRETARMVVRQPLELVEMTEKLDIYVTVKGGGITGQAGAIRHGITRALMELDEALRPSLRAAGFVTRDARKVERKKVGLRKARRKPQFSKR</sequence>
<gene>
    <name evidence="1" type="primary">rpsI</name>
    <name type="ordered locus">Shew_3293</name>
</gene>
<comment type="similarity">
    <text evidence="1">Belongs to the universal ribosomal protein uS9 family.</text>
</comment>
<organism>
    <name type="scientific">Shewanella loihica (strain ATCC BAA-1088 / PV-4)</name>
    <dbReference type="NCBI Taxonomy" id="323850"/>
    <lineage>
        <taxon>Bacteria</taxon>
        <taxon>Pseudomonadati</taxon>
        <taxon>Pseudomonadota</taxon>
        <taxon>Gammaproteobacteria</taxon>
        <taxon>Alteromonadales</taxon>
        <taxon>Shewanellaceae</taxon>
        <taxon>Shewanella</taxon>
    </lineage>
</organism>
<evidence type="ECO:0000255" key="1">
    <source>
        <dbReference type="HAMAP-Rule" id="MF_00532"/>
    </source>
</evidence>
<evidence type="ECO:0000305" key="2"/>
<name>RS9_SHELP</name>
<proteinExistence type="inferred from homology"/>
<feature type="chain" id="PRO_1000051322" description="Small ribosomal subunit protein uS9">
    <location>
        <begin position="1"/>
        <end position="130"/>
    </location>
</feature>